<gene>
    <name type="ordered locus">Mpe_A3163</name>
</gene>
<sequence length="370" mass="42199">MALQDFTPSEPLTLGVELELQLLSTHDFDLAPQAEDLLRETAKHSGAWDIKPEITRSMIEIGSSIQRRHGPLREELRDMRNQLTRAARKLNIAIAGGGTHAYQHWSEQQIFPAERFRYISELYGYLAKQFTVFGQHVHVGCPDGDQALWLLHALSRYVPHFIALSASSPYVQGQDTGFDSARLNSVFAFPLSGRAPFVRSWEEFGGFFDKMTATGVVQSMKDFYWDIRPKPEFGTIELRVCDTPLSVDKAAALACYLQCICRQLREEKPFEPSEDDYLVYTFNRFQACRFGLDGEIVDPKTKQRSRLRDDILRTLTRLDEHALDLEALDATQLLRDSLFEGNDARWLRTQRAAMLPLPAVVEAAARRWGE</sequence>
<protein>
    <recommendedName>
        <fullName evidence="1">Putative glutamate--cysteine ligase 2</fullName>
        <ecNumber evidence="1">6.3.2.2</ecNumber>
    </recommendedName>
    <alternativeName>
        <fullName evidence="1">Gamma-glutamylcysteine synthetase 2</fullName>
        <shortName evidence="1">GCS 2</shortName>
        <shortName evidence="1">Gamma-GCS 2</shortName>
    </alternativeName>
</protein>
<name>GCS2_METPP</name>
<keyword id="KW-0067">ATP-binding</keyword>
<keyword id="KW-0436">Ligase</keyword>
<keyword id="KW-0547">Nucleotide-binding</keyword>
<keyword id="KW-1185">Reference proteome</keyword>
<accession>A2SKM7</accession>
<reference key="1">
    <citation type="journal article" date="2007" name="J. Bacteriol.">
        <title>Whole-genome analysis of the methyl tert-butyl ether-degrading beta-proteobacterium Methylibium petroleiphilum PM1.</title>
        <authorList>
            <person name="Kane S.R."/>
            <person name="Chakicherla A.Y."/>
            <person name="Chain P.S.G."/>
            <person name="Schmidt R."/>
            <person name="Shin M.W."/>
            <person name="Legler T.C."/>
            <person name="Scow K.M."/>
            <person name="Larimer F.W."/>
            <person name="Lucas S.M."/>
            <person name="Richardson P.M."/>
            <person name="Hristova K.R."/>
        </authorList>
    </citation>
    <scope>NUCLEOTIDE SEQUENCE [LARGE SCALE GENOMIC DNA]</scope>
    <source>
        <strain>ATCC BAA-1232 / LMG 22953 / PM1</strain>
    </source>
</reference>
<dbReference type="EC" id="6.3.2.2" evidence="1"/>
<dbReference type="EMBL" id="CP000555">
    <property type="protein sequence ID" value="ABM96116.1"/>
    <property type="molecule type" value="Genomic_DNA"/>
</dbReference>
<dbReference type="RefSeq" id="WP_011830739.1">
    <property type="nucleotide sequence ID" value="NC_008825.1"/>
</dbReference>
<dbReference type="SMR" id="A2SKM7"/>
<dbReference type="STRING" id="420662.Mpe_A3163"/>
<dbReference type="KEGG" id="mpt:Mpe_A3163"/>
<dbReference type="eggNOG" id="COG2170">
    <property type="taxonomic scope" value="Bacteria"/>
</dbReference>
<dbReference type="HOGENOM" id="CLU_044848_1_1_4"/>
<dbReference type="Proteomes" id="UP000000366">
    <property type="component" value="Chromosome"/>
</dbReference>
<dbReference type="GO" id="GO:0005524">
    <property type="term" value="F:ATP binding"/>
    <property type="evidence" value="ECO:0007669"/>
    <property type="project" value="UniProtKB-KW"/>
</dbReference>
<dbReference type="GO" id="GO:0004357">
    <property type="term" value="F:glutamate-cysteine ligase activity"/>
    <property type="evidence" value="ECO:0007669"/>
    <property type="project" value="UniProtKB-EC"/>
</dbReference>
<dbReference type="GO" id="GO:0042398">
    <property type="term" value="P:modified amino acid biosynthetic process"/>
    <property type="evidence" value="ECO:0007669"/>
    <property type="project" value="InterPro"/>
</dbReference>
<dbReference type="Gene3D" id="3.30.590.20">
    <property type="match status" value="1"/>
</dbReference>
<dbReference type="HAMAP" id="MF_01609">
    <property type="entry name" value="Glu_cys_ligase_2"/>
    <property type="match status" value="1"/>
</dbReference>
<dbReference type="InterPro" id="IPR050141">
    <property type="entry name" value="GCL_type2/YbdK_subfam"/>
</dbReference>
<dbReference type="InterPro" id="IPR006336">
    <property type="entry name" value="GCS2"/>
</dbReference>
<dbReference type="InterPro" id="IPR014746">
    <property type="entry name" value="Gln_synth/guanido_kin_cat_dom"/>
</dbReference>
<dbReference type="InterPro" id="IPR011793">
    <property type="entry name" value="YbdK"/>
</dbReference>
<dbReference type="NCBIfam" id="TIGR02050">
    <property type="entry name" value="gshA_cyan_rel"/>
    <property type="match status" value="1"/>
</dbReference>
<dbReference type="NCBIfam" id="NF010040">
    <property type="entry name" value="PRK13516.1"/>
    <property type="match status" value="1"/>
</dbReference>
<dbReference type="PANTHER" id="PTHR36510">
    <property type="entry name" value="GLUTAMATE--CYSTEINE LIGASE 2-RELATED"/>
    <property type="match status" value="1"/>
</dbReference>
<dbReference type="PANTHER" id="PTHR36510:SF1">
    <property type="entry name" value="GLUTAMATE--CYSTEINE LIGASE 2-RELATED"/>
    <property type="match status" value="1"/>
</dbReference>
<dbReference type="Pfam" id="PF04107">
    <property type="entry name" value="GCS2"/>
    <property type="match status" value="1"/>
</dbReference>
<dbReference type="SUPFAM" id="SSF55931">
    <property type="entry name" value="Glutamine synthetase/guanido kinase"/>
    <property type="match status" value="1"/>
</dbReference>
<comment type="function">
    <text evidence="1">ATP-dependent carboxylate-amine ligase which exhibits weak glutamate--cysteine ligase activity.</text>
</comment>
<comment type="catalytic activity">
    <reaction evidence="1">
        <text>L-cysteine + L-glutamate + ATP = gamma-L-glutamyl-L-cysteine + ADP + phosphate + H(+)</text>
        <dbReference type="Rhea" id="RHEA:13285"/>
        <dbReference type="ChEBI" id="CHEBI:15378"/>
        <dbReference type="ChEBI" id="CHEBI:29985"/>
        <dbReference type="ChEBI" id="CHEBI:30616"/>
        <dbReference type="ChEBI" id="CHEBI:35235"/>
        <dbReference type="ChEBI" id="CHEBI:43474"/>
        <dbReference type="ChEBI" id="CHEBI:58173"/>
        <dbReference type="ChEBI" id="CHEBI:456216"/>
        <dbReference type="EC" id="6.3.2.2"/>
    </reaction>
</comment>
<comment type="similarity">
    <text evidence="1">Belongs to the glutamate--cysteine ligase type 2 family. YbdK subfamily.</text>
</comment>
<organism>
    <name type="scientific">Methylibium petroleiphilum (strain ATCC BAA-1232 / LMG 22953 / PM1)</name>
    <dbReference type="NCBI Taxonomy" id="420662"/>
    <lineage>
        <taxon>Bacteria</taxon>
        <taxon>Pseudomonadati</taxon>
        <taxon>Pseudomonadota</taxon>
        <taxon>Betaproteobacteria</taxon>
        <taxon>Burkholderiales</taxon>
        <taxon>Sphaerotilaceae</taxon>
        <taxon>Methylibium</taxon>
    </lineage>
</organism>
<evidence type="ECO:0000255" key="1">
    <source>
        <dbReference type="HAMAP-Rule" id="MF_01609"/>
    </source>
</evidence>
<proteinExistence type="inferred from homology"/>
<feature type="chain" id="PRO_0000291492" description="Putative glutamate--cysteine ligase 2">
    <location>
        <begin position="1"/>
        <end position="370"/>
    </location>
</feature>